<name>RHLR_PANTR</name>
<accession>Q28814</accession>
<protein>
    <recommendedName>
        <fullName>RH-like protein IIR</fullName>
    </recommendedName>
    <alternativeName>
        <fullName>Rhesus-like protein IIR</fullName>
    </alternativeName>
</protein>
<sequence>MSSKYPRSVRRCLPLCALTLEAALILLFYFFTQYDASLEDQKGLVASYQVGQDLTVMAAIGFGFLTSSFRRHSWSSVAFSLFMLALGVQWAILLDGFLSQFPPGKVVITLFSIRLATTSALSVLISVDAVLGKVNLVQLVVMVLVEVTALGTVRMVISNIFNTDYHMNLMHIYVFAAYFGLSVAWCLPKPLPKGTEDKDQIATIPSLSAMLGALFLWMFWPSFNSALLRSPIERKNAVFNTYYAVAVSVVTAISGSSLAHPQGKISMSYMHNAVLAGGVAVGTSCHLIPSPWLAMVLGLVAGLISVGGAKYLPGCCNRVLGIPHSSVMGSNFSWLGLLGEIIYIVLVVRHTIWNGNGMIGFQVLLRIGEFSLATTIALTSGLLTGLLLNLKIWKAPHEAKYFDDQVFWKFPHLAVGF</sequence>
<keyword id="KW-0472">Membrane</keyword>
<keyword id="KW-1185">Reference proteome</keyword>
<keyword id="KW-0812">Transmembrane</keyword>
<keyword id="KW-1133">Transmembrane helix</keyword>
<feature type="chain" id="PRO_0000168198" description="RH-like protein IIR">
    <location>
        <begin position="1"/>
        <end position="417"/>
    </location>
</feature>
<feature type="transmembrane region" description="Helical" evidence="1">
    <location>
        <begin position="12"/>
        <end position="32"/>
    </location>
</feature>
<feature type="transmembrane region" description="Helical" evidence="1">
    <location>
        <begin position="44"/>
        <end position="64"/>
    </location>
</feature>
<feature type="transmembrane region" description="Helical" evidence="1">
    <location>
        <begin position="77"/>
        <end position="97"/>
    </location>
</feature>
<feature type="transmembrane region" description="Helical" evidence="1">
    <location>
        <begin position="125"/>
        <end position="145"/>
    </location>
</feature>
<feature type="transmembrane region" description="Helical" evidence="1">
    <location>
        <begin position="172"/>
        <end position="192"/>
    </location>
</feature>
<feature type="transmembrane region" description="Helical" evidence="1">
    <location>
        <begin position="203"/>
        <end position="223"/>
    </location>
</feature>
<feature type="transmembrane region" description="Helical" evidence="1">
    <location>
        <begin position="238"/>
        <end position="258"/>
    </location>
</feature>
<feature type="transmembrane region" description="Helical" evidence="1">
    <location>
        <begin position="265"/>
        <end position="285"/>
    </location>
</feature>
<feature type="transmembrane region" description="Helical" evidence="1">
    <location>
        <begin position="287"/>
        <end position="307"/>
    </location>
</feature>
<feature type="transmembrane region" description="Helical" evidence="1">
    <location>
        <begin position="331"/>
        <end position="351"/>
    </location>
</feature>
<feature type="transmembrane region" description="Helical" evidence="1">
    <location>
        <begin position="358"/>
        <end position="378"/>
    </location>
</feature>
<evidence type="ECO:0000255" key="1"/>
<evidence type="ECO:0000305" key="2"/>
<proteinExistence type="evidence at transcript level"/>
<reference key="1">
    <citation type="journal article" date="1994" name="Biochem. Genet.">
        <title>Molecular genetics of chimpanzee Rh-related genes: their relationship with the R-C-E-F blood group system, the chimpanzee counterpart of the human rhesus system.</title>
        <authorList>
            <person name="Salvignol I."/>
            <person name="Blancher A."/>
            <person name="Calvas P."/>
            <person name="Clayton J."/>
            <person name="Socha W.W."/>
            <person name="Colin Y."/>
            <person name="Ruffie J."/>
        </authorList>
    </citation>
    <scope>NUCLEOTIDE SEQUENCE [MRNA]</scope>
    <source>
        <tissue>Bone marrow</tissue>
    </source>
</reference>
<comment type="function">
    <text>May be part of an oligomeric complex which is likely to have a transport or channel function in the erythrocyte membrane.</text>
</comment>
<comment type="subcellular location">
    <subcellularLocation>
        <location>Membrane</location>
        <topology>Multi-pass membrane protein</topology>
    </subcellularLocation>
</comment>
<comment type="similarity">
    <text evidence="2">Belongs to the ammonium transporter (TC 2.A.49) family. Rh subfamily.</text>
</comment>
<dbReference type="EMBL" id="L37050">
    <property type="protein sequence ID" value="AAA65624.1"/>
    <property type="molecule type" value="mRNA"/>
</dbReference>
<dbReference type="PIR" id="I37005">
    <property type="entry name" value="I37005"/>
</dbReference>
<dbReference type="SMR" id="Q28814"/>
<dbReference type="FunCoup" id="Q28814">
    <property type="interactions" value="18"/>
</dbReference>
<dbReference type="STRING" id="9598.ENSPTRP00000055141"/>
<dbReference type="InParanoid" id="Q28814"/>
<dbReference type="Proteomes" id="UP000002277">
    <property type="component" value="Unplaced"/>
</dbReference>
<dbReference type="GO" id="GO:0005886">
    <property type="term" value="C:plasma membrane"/>
    <property type="evidence" value="ECO:0000318"/>
    <property type="project" value="GO_Central"/>
</dbReference>
<dbReference type="GO" id="GO:0008519">
    <property type="term" value="F:ammonium channel activity"/>
    <property type="evidence" value="ECO:0000318"/>
    <property type="project" value="GO_Central"/>
</dbReference>
<dbReference type="GO" id="GO:0097272">
    <property type="term" value="P:ammonium homeostasis"/>
    <property type="evidence" value="ECO:0000318"/>
    <property type="project" value="GO_Central"/>
</dbReference>
<dbReference type="GO" id="GO:0072488">
    <property type="term" value="P:ammonium transmembrane transport"/>
    <property type="evidence" value="ECO:0000318"/>
    <property type="project" value="GO_Central"/>
</dbReference>
<dbReference type="FunFam" id="1.10.3430.10:FF:000009">
    <property type="entry name" value="Blood group Rh(D) polypeptide"/>
    <property type="match status" value="1"/>
</dbReference>
<dbReference type="Gene3D" id="1.10.3430.10">
    <property type="entry name" value="Ammonium transporter AmtB like domains"/>
    <property type="match status" value="1"/>
</dbReference>
<dbReference type="InterPro" id="IPR029020">
    <property type="entry name" value="Ammonium/urea_transptr"/>
</dbReference>
<dbReference type="InterPro" id="IPR024041">
    <property type="entry name" value="NH4_transpt_AmtB-like_dom"/>
</dbReference>
<dbReference type="InterPro" id="IPR002229">
    <property type="entry name" value="RhesusRHD"/>
</dbReference>
<dbReference type="PANTHER" id="PTHR11730">
    <property type="entry name" value="AMMONIUM TRANSPORTER"/>
    <property type="match status" value="1"/>
</dbReference>
<dbReference type="PANTHER" id="PTHR11730:SF43">
    <property type="entry name" value="BLOOD GROUP RH(CE) POLYPEPTIDE-RELATED"/>
    <property type="match status" value="1"/>
</dbReference>
<dbReference type="Pfam" id="PF00909">
    <property type="entry name" value="Ammonium_transp"/>
    <property type="match status" value="1"/>
</dbReference>
<dbReference type="PRINTS" id="PR00342">
    <property type="entry name" value="RHESUSRHD"/>
</dbReference>
<dbReference type="SUPFAM" id="SSF111352">
    <property type="entry name" value="Ammonium transporter"/>
    <property type="match status" value="1"/>
</dbReference>
<organism>
    <name type="scientific">Pan troglodytes</name>
    <name type="common">Chimpanzee</name>
    <dbReference type="NCBI Taxonomy" id="9598"/>
    <lineage>
        <taxon>Eukaryota</taxon>
        <taxon>Metazoa</taxon>
        <taxon>Chordata</taxon>
        <taxon>Craniata</taxon>
        <taxon>Vertebrata</taxon>
        <taxon>Euteleostomi</taxon>
        <taxon>Mammalia</taxon>
        <taxon>Eutheria</taxon>
        <taxon>Euarchontoglires</taxon>
        <taxon>Primates</taxon>
        <taxon>Haplorrhini</taxon>
        <taxon>Catarrhini</taxon>
        <taxon>Hominidae</taxon>
        <taxon>Pan</taxon>
    </lineage>
</organism>